<organism>
    <name type="scientific">Bacillus thuringiensis subsp. konkukian (strain 97-27)</name>
    <dbReference type="NCBI Taxonomy" id="281309"/>
    <lineage>
        <taxon>Bacteria</taxon>
        <taxon>Bacillati</taxon>
        <taxon>Bacillota</taxon>
        <taxon>Bacilli</taxon>
        <taxon>Bacillales</taxon>
        <taxon>Bacillaceae</taxon>
        <taxon>Bacillus</taxon>
        <taxon>Bacillus cereus group</taxon>
    </lineage>
</organism>
<feature type="chain" id="PRO_0000212016" description="Protein-arginine kinase">
    <location>
        <begin position="1"/>
        <end position="354"/>
    </location>
</feature>
<feature type="domain" description="Phosphagen kinase C-terminal" evidence="1">
    <location>
        <begin position="24"/>
        <end position="254"/>
    </location>
</feature>
<feature type="short sequence motif" description="RDXXRA motif of the pArg binding pocket involved in allosteric regulation" evidence="1">
    <location>
        <begin position="337"/>
        <end position="342"/>
    </location>
</feature>
<feature type="binding site" evidence="1">
    <location>
        <begin position="27"/>
        <end position="31"/>
    </location>
    <ligand>
        <name>ATP</name>
        <dbReference type="ChEBI" id="CHEBI:30616"/>
    </ligand>
</feature>
<feature type="binding site" evidence="1">
    <location>
        <position position="92"/>
    </location>
    <ligand>
        <name>ATP</name>
        <dbReference type="ChEBI" id="CHEBI:30616"/>
    </ligand>
</feature>
<feature type="binding site" evidence="1">
    <location>
        <position position="125"/>
    </location>
    <ligand>
        <name>ATP</name>
        <dbReference type="ChEBI" id="CHEBI:30616"/>
    </ligand>
</feature>
<feature type="binding site" evidence="1">
    <location>
        <begin position="176"/>
        <end position="180"/>
    </location>
    <ligand>
        <name>ATP</name>
        <dbReference type="ChEBI" id="CHEBI:30616"/>
    </ligand>
</feature>
<feature type="binding site" evidence="1">
    <location>
        <begin position="207"/>
        <end position="212"/>
    </location>
    <ligand>
        <name>ATP</name>
        <dbReference type="ChEBI" id="CHEBI:30616"/>
    </ligand>
</feature>
<dbReference type="EC" id="2.7.14.1" evidence="1"/>
<dbReference type="EMBL" id="AE017355">
    <property type="protein sequence ID" value="AAT61518.1"/>
    <property type="molecule type" value="Genomic_DNA"/>
</dbReference>
<dbReference type="RefSeq" id="WP_000050828.1">
    <property type="nucleotide sequence ID" value="NC_005957.1"/>
</dbReference>
<dbReference type="RefSeq" id="YP_034433.1">
    <property type="nucleotide sequence ID" value="NC_005957.1"/>
</dbReference>
<dbReference type="SMR" id="Q6HPT7"/>
<dbReference type="KEGG" id="btk:BT9727_0077"/>
<dbReference type="PATRIC" id="fig|281309.8.peg.78"/>
<dbReference type="HOGENOM" id="CLU_066591_1_0_9"/>
<dbReference type="Proteomes" id="UP000001301">
    <property type="component" value="Chromosome"/>
</dbReference>
<dbReference type="GO" id="GO:0005615">
    <property type="term" value="C:extracellular space"/>
    <property type="evidence" value="ECO:0007669"/>
    <property type="project" value="TreeGrafter"/>
</dbReference>
<dbReference type="GO" id="GO:0005524">
    <property type="term" value="F:ATP binding"/>
    <property type="evidence" value="ECO:0007669"/>
    <property type="project" value="UniProtKB-KW"/>
</dbReference>
<dbReference type="GO" id="GO:0004111">
    <property type="term" value="F:creatine kinase activity"/>
    <property type="evidence" value="ECO:0007669"/>
    <property type="project" value="InterPro"/>
</dbReference>
<dbReference type="GO" id="GO:0004672">
    <property type="term" value="F:protein kinase activity"/>
    <property type="evidence" value="ECO:0007669"/>
    <property type="project" value="UniProtKB-UniRule"/>
</dbReference>
<dbReference type="GO" id="GO:0046314">
    <property type="term" value="P:phosphocreatine biosynthetic process"/>
    <property type="evidence" value="ECO:0007669"/>
    <property type="project" value="InterPro"/>
</dbReference>
<dbReference type="CDD" id="cd07930">
    <property type="entry name" value="bacterial_phosphagen_kinase"/>
    <property type="match status" value="1"/>
</dbReference>
<dbReference type="FunFam" id="3.30.590.10:FF:000007">
    <property type="entry name" value="Protein-arginine kinase"/>
    <property type="match status" value="1"/>
</dbReference>
<dbReference type="Gene3D" id="3.30.590.10">
    <property type="entry name" value="Glutamine synthetase/guanido kinase, catalytic domain"/>
    <property type="match status" value="1"/>
</dbReference>
<dbReference type="HAMAP" id="MF_00602">
    <property type="entry name" value="Prot_Arg_kinase"/>
    <property type="match status" value="1"/>
</dbReference>
<dbReference type="InterPro" id="IPR023660">
    <property type="entry name" value="Arg_Kinase"/>
</dbReference>
<dbReference type="InterPro" id="IPR000749">
    <property type="entry name" value="ATP-guanido_PTrfase"/>
</dbReference>
<dbReference type="InterPro" id="IPR022415">
    <property type="entry name" value="ATP-guanido_PTrfase_AS"/>
</dbReference>
<dbReference type="InterPro" id="IPR022414">
    <property type="entry name" value="ATP-guanido_PTrfase_cat"/>
</dbReference>
<dbReference type="InterPro" id="IPR014746">
    <property type="entry name" value="Gln_synth/guanido_kin_cat_dom"/>
</dbReference>
<dbReference type="NCBIfam" id="NF002194">
    <property type="entry name" value="PRK01059.1-4"/>
    <property type="match status" value="1"/>
</dbReference>
<dbReference type="NCBIfam" id="NF002195">
    <property type="entry name" value="PRK01059.1-5"/>
    <property type="match status" value="1"/>
</dbReference>
<dbReference type="PANTHER" id="PTHR11547:SF38">
    <property type="entry name" value="ARGININE KINASE 1-RELATED"/>
    <property type="match status" value="1"/>
</dbReference>
<dbReference type="PANTHER" id="PTHR11547">
    <property type="entry name" value="ARGININE OR CREATINE KINASE"/>
    <property type="match status" value="1"/>
</dbReference>
<dbReference type="Pfam" id="PF00217">
    <property type="entry name" value="ATP-gua_Ptrans"/>
    <property type="match status" value="1"/>
</dbReference>
<dbReference type="SUPFAM" id="SSF55931">
    <property type="entry name" value="Glutamine synthetase/guanido kinase"/>
    <property type="match status" value="1"/>
</dbReference>
<dbReference type="PROSITE" id="PS00112">
    <property type="entry name" value="PHOSPHAGEN_KINASE"/>
    <property type="match status" value="1"/>
</dbReference>
<dbReference type="PROSITE" id="PS51510">
    <property type="entry name" value="PHOSPHAGEN_KINASE_C"/>
    <property type="match status" value="1"/>
</dbReference>
<proteinExistence type="inferred from homology"/>
<protein>
    <recommendedName>
        <fullName evidence="1">Protein-arginine kinase</fullName>
        <ecNumber evidence="1">2.7.14.1</ecNumber>
    </recommendedName>
</protein>
<reference key="1">
    <citation type="journal article" date="2006" name="J. Bacteriol.">
        <title>Pathogenomic sequence analysis of Bacillus cereus and Bacillus thuringiensis isolates closely related to Bacillus anthracis.</title>
        <authorList>
            <person name="Han C.S."/>
            <person name="Xie G."/>
            <person name="Challacombe J.F."/>
            <person name="Altherr M.R."/>
            <person name="Bhotika S.S."/>
            <person name="Bruce D."/>
            <person name="Campbell C.S."/>
            <person name="Campbell M.L."/>
            <person name="Chen J."/>
            <person name="Chertkov O."/>
            <person name="Cleland C."/>
            <person name="Dimitrijevic M."/>
            <person name="Doggett N.A."/>
            <person name="Fawcett J.J."/>
            <person name="Glavina T."/>
            <person name="Goodwin L.A."/>
            <person name="Hill K.K."/>
            <person name="Hitchcock P."/>
            <person name="Jackson P.J."/>
            <person name="Keim P."/>
            <person name="Kewalramani A.R."/>
            <person name="Longmire J."/>
            <person name="Lucas S."/>
            <person name="Malfatti S."/>
            <person name="McMurry K."/>
            <person name="Meincke L.J."/>
            <person name="Misra M."/>
            <person name="Moseman B.L."/>
            <person name="Mundt M."/>
            <person name="Munk A.C."/>
            <person name="Okinaka R.T."/>
            <person name="Parson-Quintana B."/>
            <person name="Reilly L.P."/>
            <person name="Richardson P."/>
            <person name="Robinson D.L."/>
            <person name="Rubin E."/>
            <person name="Saunders E."/>
            <person name="Tapia R."/>
            <person name="Tesmer J.G."/>
            <person name="Thayer N."/>
            <person name="Thompson L.S."/>
            <person name="Tice H."/>
            <person name="Ticknor L.O."/>
            <person name="Wills P.L."/>
            <person name="Brettin T.S."/>
            <person name="Gilna P."/>
        </authorList>
    </citation>
    <scope>NUCLEOTIDE SEQUENCE [LARGE SCALE GENOMIC DNA]</scope>
    <source>
        <strain>97-27</strain>
    </source>
</reference>
<keyword id="KW-0021">Allosteric enzyme</keyword>
<keyword id="KW-0067">ATP-binding</keyword>
<keyword id="KW-0418">Kinase</keyword>
<keyword id="KW-0547">Nucleotide-binding</keyword>
<keyword id="KW-0808">Transferase</keyword>
<evidence type="ECO:0000255" key="1">
    <source>
        <dbReference type="HAMAP-Rule" id="MF_00602"/>
    </source>
</evidence>
<sequence length="354" mass="40005">MSLDKIMNEAISPWMKGDGPDSDIVLSSRIRLARNFKKYQFSTMQNEEEAKQIQELFKKEFINKTVEPFGEFELLKMNELTPLQRRVLVEKHLISPNLAGTEYGACLLSESEHISVMLNEEDHIRIQCLFSGLQLSEALQSANQIDNWIEKEVEYAFDESLGYITSCPTNVGTGLRASVMIHLPGLVLTKRISRIIQVIQKLGLVVRGIYGEGSEALGNIFQVSNQMTLGKSEEDIIADLKSVIQQIIQQEKMARELIVQNSSIELEDKVYRSYGILANSRLIQSAEAANCLSDLRLGIDLGYIQGISRNILTELMVLTQPGILQQYAGGPLGPEERDYRRATLIRERLRIEKN</sequence>
<gene>
    <name evidence="1" type="primary">mcsB</name>
    <name type="synonym">karG</name>
    <name type="ordered locus">BT9727_0077</name>
</gene>
<name>MCSB_BACHK</name>
<comment type="function">
    <text evidence="1">Catalyzes the specific phosphorylation of arginine residues in a large number of proteins. Is part of the bacterial stress response system. Protein arginine phosphorylation has a physiologically important role and is involved in the regulation of many critical cellular processes, such as protein homeostasis, motility, competence, and stringent and stress responses, by regulating gene expression and protein activity.</text>
</comment>
<comment type="catalytic activity">
    <reaction evidence="1">
        <text>L-arginyl-[protein] + ATP = N(omega)-phospho-L-arginyl-[protein] + ADP + H(+)</text>
        <dbReference type="Rhea" id="RHEA:43384"/>
        <dbReference type="Rhea" id="RHEA-COMP:10532"/>
        <dbReference type="Rhea" id="RHEA-COMP:10533"/>
        <dbReference type="ChEBI" id="CHEBI:15378"/>
        <dbReference type="ChEBI" id="CHEBI:29965"/>
        <dbReference type="ChEBI" id="CHEBI:30616"/>
        <dbReference type="ChEBI" id="CHEBI:83226"/>
        <dbReference type="ChEBI" id="CHEBI:456216"/>
        <dbReference type="EC" id="2.7.14.1"/>
    </reaction>
</comment>
<comment type="activity regulation">
    <text evidence="1">Appears to be allosterically activated by the binding of pArg-containing polypeptides to the pArg-binding pocket localized in the C-terminal domain of McsB.</text>
</comment>
<comment type="similarity">
    <text evidence="1">Belongs to the ATP:guanido phosphotransferase family.</text>
</comment>
<accession>Q6HPT7</accession>